<protein>
    <recommendedName>
        <fullName evidence="1">Malate synthase G</fullName>
        <ecNumber evidence="1">2.3.3.9</ecNumber>
    </recommendedName>
</protein>
<sequence length="725" mass="78347">MTGYVQVGGLQVAKVLYDFVNNEAIPGTGIVAEQFWAGAEKIINDLAPKNKALLAKRDELQAKIDAWHQARKGQAHDAAAYKAFLQEIGYLLPQADDFQATTQNVDEEIAHMAGPQLVVPVMNARFALNAANARWGSLYDALYGTDAISDEGGAEKGQGYNKVRGDKVIAFARAFLDEAAPLAAGSHVDSTGYRIEGGKLVVALKGGSNTGLRDDAQLIGFHGDAAAPTAVLLKHNGLHFEIQVDASTPVGSTDAAGVKDILMESALTTIMDCEDSVAAVDADDKVIVYRNWLGLMKGDLAESVSKGGKTFTRTMNPDREYAAPNGGSVTLHGRSLLFVRNVGHLMTNPAILDAQGNEIPEGIQDGLFTNLIALHNLNGNTSRKNTRSGSVYIVKPKMHGPEEVAFATEIFSQVEDLLGMPRNTVKVGIMDEERRTTVNLKSCIKAAAERVVFINTGFLDRTGDEIHTSMEAGAVVRKGAMKNEKWIGAYENNNVDVGLATGLQGRAQIGKGMWAMPDLMAAMLEQKIAHPLAGANTAWVPSPTAATLHALHYHKVDVQARQRELASRTPASVDDILAIPLAADTNWSAEEIRNELDNNAQGILGYVVRWIDQGVGCSKVPDINNVGLMEDRATLRISAQLLANWLRHGVVSQEQVLESLKRMAVVVDQQNAGDPLYRPMAPNFDDNVAFQAAVELVVEGGKQPNGYTEPVLHRRRREFKARNGL</sequence>
<dbReference type="EC" id="2.3.3.9" evidence="1"/>
<dbReference type="EMBL" id="AE015451">
    <property type="protein sequence ID" value="AAN65987.1"/>
    <property type="molecule type" value="Genomic_DNA"/>
</dbReference>
<dbReference type="RefSeq" id="NP_742523.1">
    <property type="nucleotide sequence ID" value="NC_002947.4"/>
</dbReference>
<dbReference type="RefSeq" id="WP_010951708.1">
    <property type="nucleotide sequence ID" value="NC_002947.4"/>
</dbReference>
<dbReference type="SMR" id="Q88QX8"/>
<dbReference type="STRING" id="160488.PP_0356"/>
<dbReference type="PaxDb" id="160488-PP_0356"/>
<dbReference type="KEGG" id="ppu:PP_0356"/>
<dbReference type="PATRIC" id="fig|160488.4.peg.384"/>
<dbReference type="eggNOG" id="COG2225">
    <property type="taxonomic scope" value="Bacteria"/>
</dbReference>
<dbReference type="HOGENOM" id="CLU_028446_1_0_6"/>
<dbReference type="OrthoDB" id="9762054at2"/>
<dbReference type="PhylomeDB" id="Q88QX8"/>
<dbReference type="BioCyc" id="PPUT160488:G1G01-390-MONOMER"/>
<dbReference type="UniPathway" id="UPA00703">
    <property type="reaction ID" value="UER00720"/>
</dbReference>
<dbReference type="Proteomes" id="UP000000556">
    <property type="component" value="Chromosome"/>
</dbReference>
<dbReference type="GO" id="GO:0005829">
    <property type="term" value="C:cytosol"/>
    <property type="evidence" value="ECO:0007669"/>
    <property type="project" value="TreeGrafter"/>
</dbReference>
<dbReference type="GO" id="GO:0000287">
    <property type="term" value="F:magnesium ion binding"/>
    <property type="evidence" value="ECO:0007669"/>
    <property type="project" value="TreeGrafter"/>
</dbReference>
<dbReference type="GO" id="GO:0004474">
    <property type="term" value="F:malate synthase activity"/>
    <property type="evidence" value="ECO:0007669"/>
    <property type="project" value="UniProtKB-UniRule"/>
</dbReference>
<dbReference type="GO" id="GO:0009436">
    <property type="term" value="P:glyoxylate catabolic process"/>
    <property type="evidence" value="ECO:0007669"/>
    <property type="project" value="TreeGrafter"/>
</dbReference>
<dbReference type="GO" id="GO:0006097">
    <property type="term" value="P:glyoxylate cycle"/>
    <property type="evidence" value="ECO:0007669"/>
    <property type="project" value="UniProtKB-UniRule"/>
</dbReference>
<dbReference type="GO" id="GO:0006099">
    <property type="term" value="P:tricarboxylic acid cycle"/>
    <property type="evidence" value="ECO:0007669"/>
    <property type="project" value="UniProtKB-KW"/>
</dbReference>
<dbReference type="CDD" id="cd00728">
    <property type="entry name" value="malate_synt_G"/>
    <property type="match status" value="1"/>
</dbReference>
<dbReference type="FunFam" id="3.20.20.360:FF:000002">
    <property type="entry name" value="Malate synthase G"/>
    <property type="match status" value="1"/>
</dbReference>
<dbReference type="Gene3D" id="3.20.20.360">
    <property type="entry name" value="Malate synthase, domain 3"/>
    <property type="match status" value="2"/>
</dbReference>
<dbReference type="Gene3D" id="1.20.1220.12">
    <property type="entry name" value="Malate synthase, domain III"/>
    <property type="match status" value="1"/>
</dbReference>
<dbReference type="HAMAP" id="MF_00641">
    <property type="entry name" value="Malate_synth_G"/>
    <property type="match status" value="1"/>
</dbReference>
<dbReference type="InterPro" id="IPR044856">
    <property type="entry name" value="Malate_synth_C_sf"/>
</dbReference>
<dbReference type="InterPro" id="IPR011076">
    <property type="entry name" value="Malate_synth_sf"/>
</dbReference>
<dbReference type="InterPro" id="IPR001465">
    <property type="entry name" value="Malate_synthase_TIM"/>
</dbReference>
<dbReference type="InterPro" id="IPR006253">
    <property type="entry name" value="Malate_synthG"/>
</dbReference>
<dbReference type="InterPro" id="IPR048355">
    <property type="entry name" value="MS_C"/>
</dbReference>
<dbReference type="InterPro" id="IPR048356">
    <property type="entry name" value="MS_N"/>
</dbReference>
<dbReference type="InterPro" id="IPR046363">
    <property type="entry name" value="MS_N_TIM-barrel_dom"/>
</dbReference>
<dbReference type="InterPro" id="IPR048357">
    <property type="entry name" value="MSG_insertion"/>
</dbReference>
<dbReference type="NCBIfam" id="TIGR01345">
    <property type="entry name" value="malate_syn_G"/>
    <property type="match status" value="1"/>
</dbReference>
<dbReference type="NCBIfam" id="NF002825">
    <property type="entry name" value="PRK02999.1"/>
    <property type="match status" value="1"/>
</dbReference>
<dbReference type="PANTHER" id="PTHR42739">
    <property type="entry name" value="MALATE SYNTHASE G"/>
    <property type="match status" value="1"/>
</dbReference>
<dbReference type="PANTHER" id="PTHR42739:SF1">
    <property type="entry name" value="MALATE SYNTHASE G"/>
    <property type="match status" value="1"/>
</dbReference>
<dbReference type="Pfam" id="PF20659">
    <property type="entry name" value="MS_C"/>
    <property type="match status" value="1"/>
</dbReference>
<dbReference type="Pfam" id="PF20656">
    <property type="entry name" value="MS_N"/>
    <property type="match status" value="1"/>
</dbReference>
<dbReference type="Pfam" id="PF01274">
    <property type="entry name" value="MS_TIM-barrel"/>
    <property type="match status" value="1"/>
</dbReference>
<dbReference type="Pfam" id="PF20658">
    <property type="entry name" value="MSG_insertion"/>
    <property type="match status" value="1"/>
</dbReference>
<dbReference type="SUPFAM" id="SSF51645">
    <property type="entry name" value="Malate synthase G"/>
    <property type="match status" value="1"/>
</dbReference>
<organism>
    <name type="scientific">Pseudomonas putida (strain ATCC 47054 / DSM 6125 / CFBP 8728 / NCIMB 11950 / KT2440)</name>
    <dbReference type="NCBI Taxonomy" id="160488"/>
    <lineage>
        <taxon>Bacteria</taxon>
        <taxon>Pseudomonadati</taxon>
        <taxon>Pseudomonadota</taxon>
        <taxon>Gammaproteobacteria</taxon>
        <taxon>Pseudomonadales</taxon>
        <taxon>Pseudomonadaceae</taxon>
        <taxon>Pseudomonas</taxon>
    </lineage>
</organism>
<evidence type="ECO:0000255" key="1">
    <source>
        <dbReference type="HAMAP-Rule" id="MF_00641"/>
    </source>
</evidence>
<accession>Q88QX8</accession>
<comment type="function">
    <text evidence="1">Involved in the glycolate utilization. Catalyzes the condensation and subsequent hydrolysis of acetyl-coenzyme A (acetyl-CoA) and glyoxylate to form malate and CoA.</text>
</comment>
<comment type="catalytic activity">
    <reaction evidence="1">
        <text>glyoxylate + acetyl-CoA + H2O = (S)-malate + CoA + H(+)</text>
        <dbReference type="Rhea" id="RHEA:18181"/>
        <dbReference type="ChEBI" id="CHEBI:15377"/>
        <dbReference type="ChEBI" id="CHEBI:15378"/>
        <dbReference type="ChEBI" id="CHEBI:15589"/>
        <dbReference type="ChEBI" id="CHEBI:36655"/>
        <dbReference type="ChEBI" id="CHEBI:57287"/>
        <dbReference type="ChEBI" id="CHEBI:57288"/>
        <dbReference type="EC" id="2.3.3.9"/>
    </reaction>
</comment>
<comment type="cofactor">
    <cofactor evidence="1">
        <name>Mg(2+)</name>
        <dbReference type="ChEBI" id="CHEBI:18420"/>
    </cofactor>
</comment>
<comment type="pathway">
    <text evidence="1">Carbohydrate metabolism; glyoxylate cycle; (S)-malate from isocitrate: step 2/2.</text>
</comment>
<comment type="subunit">
    <text evidence="1">Monomer.</text>
</comment>
<comment type="subcellular location">
    <subcellularLocation>
        <location evidence="1">Cytoplasm</location>
    </subcellularLocation>
</comment>
<comment type="similarity">
    <text evidence="1">Belongs to the malate synthase family. GlcB subfamily.</text>
</comment>
<name>MASZ_PSEPK</name>
<reference key="1">
    <citation type="journal article" date="2002" name="Environ. Microbiol.">
        <title>Complete genome sequence and comparative analysis of the metabolically versatile Pseudomonas putida KT2440.</title>
        <authorList>
            <person name="Nelson K.E."/>
            <person name="Weinel C."/>
            <person name="Paulsen I.T."/>
            <person name="Dodson R.J."/>
            <person name="Hilbert H."/>
            <person name="Martins dos Santos V.A.P."/>
            <person name="Fouts D.E."/>
            <person name="Gill S.R."/>
            <person name="Pop M."/>
            <person name="Holmes M."/>
            <person name="Brinkac L.M."/>
            <person name="Beanan M.J."/>
            <person name="DeBoy R.T."/>
            <person name="Daugherty S.C."/>
            <person name="Kolonay J.F."/>
            <person name="Madupu R."/>
            <person name="Nelson W.C."/>
            <person name="White O."/>
            <person name="Peterson J.D."/>
            <person name="Khouri H.M."/>
            <person name="Hance I."/>
            <person name="Chris Lee P."/>
            <person name="Holtzapple E.K."/>
            <person name="Scanlan D."/>
            <person name="Tran K."/>
            <person name="Moazzez A."/>
            <person name="Utterback T.R."/>
            <person name="Rizzo M."/>
            <person name="Lee K."/>
            <person name="Kosack D."/>
            <person name="Moestl D."/>
            <person name="Wedler H."/>
            <person name="Lauber J."/>
            <person name="Stjepandic D."/>
            <person name="Hoheisel J."/>
            <person name="Straetz M."/>
            <person name="Heim S."/>
            <person name="Kiewitz C."/>
            <person name="Eisen J.A."/>
            <person name="Timmis K.N."/>
            <person name="Duesterhoeft A."/>
            <person name="Tuemmler B."/>
            <person name="Fraser C.M."/>
        </authorList>
    </citation>
    <scope>NUCLEOTIDE SEQUENCE [LARGE SCALE GENOMIC DNA]</scope>
    <source>
        <strain>ATCC 47054 / DSM 6125 / CFBP 8728 / NCIMB 11950 / KT2440</strain>
    </source>
</reference>
<feature type="chain" id="PRO_0000166893" description="Malate synthase G">
    <location>
        <begin position="1"/>
        <end position="725"/>
    </location>
</feature>
<feature type="active site" description="Proton acceptor" evidence="1">
    <location>
        <position position="340"/>
    </location>
</feature>
<feature type="active site" description="Proton donor" evidence="1">
    <location>
        <position position="631"/>
    </location>
</feature>
<feature type="binding site" evidence="1">
    <location>
        <position position="118"/>
    </location>
    <ligand>
        <name>acetyl-CoA</name>
        <dbReference type="ChEBI" id="CHEBI:57288"/>
    </ligand>
</feature>
<feature type="binding site" evidence="1">
    <location>
        <begin position="125"/>
        <end position="126"/>
    </location>
    <ligand>
        <name>acetyl-CoA</name>
        <dbReference type="ChEBI" id="CHEBI:57288"/>
    </ligand>
</feature>
<feature type="binding site" evidence="1">
    <location>
        <position position="276"/>
    </location>
    <ligand>
        <name>acetyl-CoA</name>
        <dbReference type="ChEBI" id="CHEBI:57288"/>
    </ligand>
</feature>
<feature type="binding site" evidence="1">
    <location>
        <position position="313"/>
    </location>
    <ligand>
        <name>acetyl-CoA</name>
        <dbReference type="ChEBI" id="CHEBI:57288"/>
    </ligand>
</feature>
<feature type="binding site" evidence="1">
    <location>
        <position position="340"/>
    </location>
    <ligand>
        <name>glyoxylate</name>
        <dbReference type="ChEBI" id="CHEBI:36655"/>
    </ligand>
</feature>
<feature type="binding site" evidence="1">
    <location>
        <position position="432"/>
    </location>
    <ligand>
        <name>glyoxylate</name>
        <dbReference type="ChEBI" id="CHEBI:36655"/>
    </ligand>
</feature>
<feature type="binding site" evidence="1">
    <location>
        <position position="432"/>
    </location>
    <ligand>
        <name>Mg(2+)</name>
        <dbReference type="ChEBI" id="CHEBI:18420"/>
    </ligand>
</feature>
<feature type="binding site" evidence="1">
    <location>
        <begin position="457"/>
        <end position="460"/>
    </location>
    <ligand>
        <name>glyoxylate</name>
        <dbReference type="ChEBI" id="CHEBI:36655"/>
    </ligand>
</feature>
<feature type="binding site" evidence="1">
    <location>
        <position position="460"/>
    </location>
    <ligand>
        <name>Mg(2+)</name>
        <dbReference type="ChEBI" id="CHEBI:18420"/>
    </ligand>
</feature>
<feature type="binding site" evidence="1">
    <location>
        <position position="541"/>
    </location>
    <ligand>
        <name>acetyl-CoA</name>
        <dbReference type="ChEBI" id="CHEBI:57288"/>
    </ligand>
</feature>
<feature type="modified residue" description="Cysteine sulfenic acid (-SOH)" evidence="1">
    <location>
        <position position="617"/>
    </location>
</feature>
<proteinExistence type="inferred from homology"/>
<keyword id="KW-0963">Cytoplasm</keyword>
<keyword id="KW-0329">Glyoxylate bypass</keyword>
<keyword id="KW-0460">Magnesium</keyword>
<keyword id="KW-0479">Metal-binding</keyword>
<keyword id="KW-0558">Oxidation</keyword>
<keyword id="KW-1185">Reference proteome</keyword>
<keyword id="KW-0808">Transferase</keyword>
<keyword id="KW-0816">Tricarboxylic acid cycle</keyword>
<gene>
    <name evidence="1" type="primary">glcB</name>
    <name type="ordered locus">PP_0356</name>
</gene>